<name>RL14_TRIEI</name>
<gene>
    <name evidence="1" type="primary">rplN</name>
    <name evidence="1" type="synonym">rpl14</name>
    <name type="ordered locus">Tery_3002</name>
</gene>
<reference key="1">
    <citation type="journal article" date="2015" name="Proc. Natl. Acad. Sci. U.S.A.">
        <title>Trichodesmium genome maintains abundant, widespread noncoding DNA in situ, despite oligotrophic lifestyle.</title>
        <authorList>
            <person name="Walworth N."/>
            <person name="Pfreundt U."/>
            <person name="Nelson W.C."/>
            <person name="Mincer T."/>
            <person name="Heidelberg J.F."/>
            <person name="Fu F."/>
            <person name="Waterbury J.B."/>
            <person name="Glavina del Rio T."/>
            <person name="Goodwin L."/>
            <person name="Kyrpides N.C."/>
            <person name="Land M.L."/>
            <person name="Woyke T."/>
            <person name="Hutchins D.A."/>
            <person name="Hess W.R."/>
            <person name="Webb E.A."/>
        </authorList>
    </citation>
    <scope>NUCLEOTIDE SEQUENCE [LARGE SCALE GENOMIC DNA]</scope>
    <source>
        <strain>IMS101</strain>
    </source>
</reference>
<evidence type="ECO:0000255" key="1">
    <source>
        <dbReference type="HAMAP-Rule" id="MF_01367"/>
    </source>
</evidence>
<evidence type="ECO:0000305" key="2"/>
<feature type="chain" id="PRO_1000055745" description="Large ribosomal subunit protein uL14">
    <location>
        <begin position="1"/>
        <end position="122"/>
    </location>
</feature>
<organism>
    <name type="scientific">Trichodesmium erythraeum (strain IMS101)</name>
    <dbReference type="NCBI Taxonomy" id="203124"/>
    <lineage>
        <taxon>Bacteria</taxon>
        <taxon>Bacillati</taxon>
        <taxon>Cyanobacteriota</taxon>
        <taxon>Cyanophyceae</taxon>
        <taxon>Oscillatoriophycideae</taxon>
        <taxon>Oscillatoriales</taxon>
        <taxon>Microcoleaceae</taxon>
        <taxon>Trichodesmium</taxon>
    </lineage>
</organism>
<proteinExistence type="inferred from homology"/>
<keyword id="KW-0687">Ribonucleoprotein</keyword>
<keyword id="KW-0689">Ribosomal protein</keyword>
<keyword id="KW-0694">RNA-binding</keyword>
<keyword id="KW-0699">rRNA-binding</keyword>
<comment type="function">
    <text evidence="1">Binds to 23S rRNA. Forms part of two intersubunit bridges in the 70S ribosome.</text>
</comment>
<comment type="subunit">
    <text evidence="1">Part of the 50S ribosomal subunit. Forms a cluster with proteins L3 and L19. In the 70S ribosome, L14 and L19 interact and together make contacts with the 16S rRNA in bridges B5 and B8.</text>
</comment>
<comment type="similarity">
    <text evidence="1">Belongs to the universal ribosomal protein uL14 family.</text>
</comment>
<dbReference type="EMBL" id="CP000393">
    <property type="protein sequence ID" value="ABG52157.1"/>
    <property type="molecule type" value="Genomic_DNA"/>
</dbReference>
<dbReference type="RefSeq" id="WP_011612512.1">
    <property type="nucleotide sequence ID" value="NC_008312.1"/>
</dbReference>
<dbReference type="SMR" id="Q110B7"/>
<dbReference type="STRING" id="203124.Tery_3002"/>
<dbReference type="KEGG" id="ter:Tery_3002"/>
<dbReference type="eggNOG" id="COG0093">
    <property type="taxonomic scope" value="Bacteria"/>
</dbReference>
<dbReference type="HOGENOM" id="CLU_095071_2_1_3"/>
<dbReference type="OrthoDB" id="9806379at2"/>
<dbReference type="GO" id="GO:0022625">
    <property type="term" value="C:cytosolic large ribosomal subunit"/>
    <property type="evidence" value="ECO:0007669"/>
    <property type="project" value="TreeGrafter"/>
</dbReference>
<dbReference type="GO" id="GO:0070180">
    <property type="term" value="F:large ribosomal subunit rRNA binding"/>
    <property type="evidence" value="ECO:0007669"/>
    <property type="project" value="TreeGrafter"/>
</dbReference>
<dbReference type="GO" id="GO:0003735">
    <property type="term" value="F:structural constituent of ribosome"/>
    <property type="evidence" value="ECO:0007669"/>
    <property type="project" value="InterPro"/>
</dbReference>
<dbReference type="GO" id="GO:0006412">
    <property type="term" value="P:translation"/>
    <property type="evidence" value="ECO:0007669"/>
    <property type="project" value="UniProtKB-UniRule"/>
</dbReference>
<dbReference type="CDD" id="cd00337">
    <property type="entry name" value="Ribosomal_uL14"/>
    <property type="match status" value="1"/>
</dbReference>
<dbReference type="FunFam" id="2.40.150.20:FF:000001">
    <property type="entry name" value="50S ribosomal protein L14"/>
    <property type="match status" value="1"/>
</dbReference>
<dbReference type="Gene3D" id="2.40.150.20">
    <property type="entry name" value="Ribosomal protein L14"/>
    <property type="match status" value="1"/>
</dbReference>
<dbReference type="HAMAP" id="MF_01367">
    <property type="entry name" value="Ribosomal_uL14"/>
    <property type="match status" value="1"/>
</dbReference>
<dbReference type="InterPro" id="IPR000218">
    <property type="entry name" value="Ribosomal_uL14"/>
</dbReference>
<dbReference type="InterPro" id="IPR005745">
    <property type="entry name" value="Ribosomal_uL14_bac-type"/>
</dbReference>
<dbReference type="InterPro" id="IPR019972">
    <property type="entry name" value="Ribosomal_uL14_CS"/>
</dbReference>
<dbReference type="InterPro" id="IPR036853">
    <property type="entry name" value="Ribosomal_uL14_sf"/>
</dbReference>
<dbReference type="NCBIfam" id="TIGR01067">
    <property type="entry name" value="rplN_bact"/>
    <property type="match status" value="1"/>
</dbReference>
<dbReference type="PANTHER" id="PTHR11761">
    <property type="entry name" value="50S/60S RIBOSOMAL PROTEIN L14/L23"/>
    <property type="match status" value="1"/>
</dbReference>
<dbReference type="PANTHER" id="PTHR11761:SF3">
    <property type="entry name" value="LARGE RIBOSOMAL SUBUNIT PROTEIN UL14M"/>
    <property type="match status" value="1"/>
</dbReference>
<dbReference type="Pfam" id="PF00238">
    <property type="entry name" value="Ribosomal_L14"/>
    <property type="match status" value="1"/>
</dbReference>
<dbReference type="SMART" id="SM01374">
    <property type="entry name" value="Ribosomal_L14"/>
    <property type="match status" value="1"/>
</dbReference>
<dbReference type="SUPFAM" id="SSF50193">
    <property type="entry name" value="Ribosomal protein L14"/>
    <property type="match status" value="1"/>
</dbReference>
<dbReference type="PROSITE" id="PS00049">
    <property type="entry name" value="RIBOSOMAL_L14"/>
    <property type="match status" value="1"/>
</dbReference>
<sequence length="122" mass="13313">MIQQQSLLNVADNSGARKLMCIRVVGGGNRRYAHIGDVIIAVVKDASPNMAVKKSDVVRAVVVRTKKGLRRDSGMSIRFDDNAAVIINQDGNPRGTRVFGPVARELRDKNFTKIVSLAPEVL</sequence>
<accession>Q110B7</accession>
<protein>
    <recommendedName>
        <fullName evidence="1">Large ribosomal subunit protein uL14</fullName>
    </recommendedName>
    <alternativeName>
        <fullName evidence="2">50S ribosomal protein L14</fullName>
    </alternativeName>
</protein>